<feature type="chain" id="PRO_1000005209" description="Small ribosomal subunit protein bS6">
    <location>
        <begin position="1"/>
        <end position="129"/>
    </location>
</feature>
<feature type="region of interest" description="Disordered" evidence="2">
    <location>
        <begin position="110"/>
        <end position="129"/>
    </location>
</feature>
<feature type="compositionally biased region" description="Basic and acidic residues" evidence="2">
    <location>
        <begin position="110"/>
        <end position="121"/>
    </location>
</feature>
<comment type="function">
    <text evidence="1">Binds together with bS18 to 16S ribosomal RNA.</text>
</comment>
<comment type="similarity">
    <text evidence="1">Belongs to the bacterial ribosomal protein bS6 family.</text>
</comment>
<name>RS6_AERS4</name>
<accession>A4SIZ7</accession>
<organism>
    <name type="scientific">Aeromonas salmonicida (strain A449)</name>
    <dbReference type="NCBI Taxonomy" id="382245"/>
    <lineage>
        <taxon>Bacteria</taxon>
        <taxon>Pseudomonadati</taxon>
        <taxon>Pseudomonadota</taxon>
        <taxon>Gammaproteobacteria</taxon>
        <taxon>Aeromonadales</taxon>
        <taxon>Aeromonadaceae</taxon>
        <taxon>Aeromonas</taxon>
    </lineage>
</organism>
<proteinExistence type="inferred from homology"/>
<dbReference type="EMBL" id="CP000644">
    <property type="protein sequence ID" value="ABO88869.1"/>
    <property type="molecule type" value="Genomic_DNA"/>
</dbReference>
<dbReference type="RefSeq" id="WP_005313395.1">
    <property type="nucleotide sequence ID" value="NC_009348.1"/>
</dbReference>
<dbReference type="SMR" id="A4SIZ7"/>
<dbReference type="STRING" id="29491.GCA_000820065_01785"/>
<dbReference type="GeneID" id="92724919"/>
<dbReference type="KEGG" id="asa:ASA_0707"/>
<dbReference type="eggNOG" id="COG0360">
    <property type="taxonomic scope" value="Bacteria"/>
</dbReference>
<dbReference type="HOGENOM" id="CLU_113441_6_1_6"/>
<dbReference type="Proteomes" id="UP000000225">
    <property type="component" value="Chromosome"/>
</dbReference>
<dbReference type="GO" id="GO:0022627">
    <property type="term" value="C:cytosolic small ribosomal subunit"/>
    <property type="evidence" value="ECO:0007669"/>
    <property type="project" value="TreeGrafter"/>
</dbReference>
<dbReference type="GO" id="GO:0070181">
    <property type="term" value="F:small ribosomal subunit rRNA binding"/>
    <property type="evidence" value="ECO:0007669"/>
    <property type="project" value="TreeGrafter"/>
</dbReference>
<dbReference type="GO" id="GO:0003735">
    <property type="term" value="F:structural constituent of ribosome"/>
    <property type="evidence" value="ECO:0007669"/>
    <property type="project" value="InterPro"/>
</dbReference>
<dbReference type="GO" id="GO:0006412">
    <property type="term" value="P:translation"/>
    <property type="evidence" value="ECO:0007669"/>
    <property type="project" value="UniProtKB-UniRule"/>
</dbReference>
<dbReference type="CDD" id="cd00473">
    <property type="entry name" value="bS6"/>
    <property type="match status" value="1"/>
</dbReference>
<dbReference type="FunFam" id="3.30.70.60:FF:000003">
    <property type="entry name" value="30S ribosomal protein S6"/>
    <property type="match status" value="1"/>
</dbReference>
<dbReference type="Gene3D" id="3.30.70.60">
    <property type="match status" value="1"/>
</dbReference>
<dbReference type="HAMAP" id="MF_00360">
    <property type="entry name" value="Ribosomal_bS6"/>
    <property type="match status" value="1"/>
</dbReference>
<dbReference type="InterPro" id="IPR000529">
    <property type="entry name" value="Ribosomal_bS6"/>
</dbReference>
<dbReference type="InterPro" id="IPR035980">
    <property type="entry name" value="Ribosomal_bS6_sf"/>
</dbReference>
<dbReference type="InterPro" id="IPR020814">
    <property type="entry name" value="Ribosomal_S6_plastid/chlpt"/>
</dbReference>
<dbReference type="InterPro" id="IPR014717">
    <property type="entry name" value="Transl_elong_EF1B/ribsomal_bS6"/>
</dbReference>
<dbReference type="NCBIfam" id="TIGR00166">
    <property type="entry name" value="S6"/>
    <property type="match status" value="1"/>
</dbReference>
<dbReference type="PANTHER" id="PTHR21011">
    <property type="entry name" value="MITOCHONDRIAL 28S RIBOSOMAL PROTEIN S6"/>
    <property type="match status" value="1"/>
</dbReference>
<dbReference type="PANTHER" id="PTHR21011:SF1">
    <property type="entry name" value="SMALL RIBOSOMAL SUBUNIT PROTEIN BS6M"/>
    <property type="match status" value="1"/>
</dbReference>
<dbReference type="Pfam" id="PF01250">
    <property type="entry name" value="Ribosomal_S6"/>
    <property type="match status" value="1"/>
</dbReference>
<dbReference type="SUPFAM" id="SSF54995">
    <property type="entry name" value="Ribosomal protein S6"/>
    <property type="match status" value="1"/>
</dbReference>
<protein>
    <recommendedName>
        <fullName evidence="1">Small ribosomal subunit protein bS6</fullName>
    </recommendedName>
    <alternativeName>
        <fullName evidence="3">30S ribosomal protein S6</fullName>
    </alternativeName>
</protein>
<reference key="1">
    <citation type="journal article" date="2008" name="BMC Genomics">
        <title>The genome of Aeromonas salmonicida subsp. salmonicida A449: insights into the evolution of a fish pathogen.</title>
        <authorList>
            <person name="Reith M.E."/>
            <person name="Singh R.K."/>
            <person name="Curtis B."/>
            <person name="Boyd J.M."/>
            <person name="Bouevitch A."/>
            <person name="Kimball J."/>
            <person name="Munholland J."/>
            <person name="Murphy C."/>
            <person name="Sarty D."/>
            <person name="Williams J."/>
            <person name="Nash J.H."/>
            <person name="Johnson S.C."/>
            <person name="Brown L.L."/>
        </authorList>
    </citation>
    <scope>NUCLEOTIDE SEQUENCE [LARGE SCALE GENOMIC DNA]</scope>
    <source>
        <strain>A449</strain>
    </source>
</reference>
<keyword id="KW-0687">Ribonucleoprotein</keyword>
<keyword id="KW-0689">Ribosomal protein</keyword>
<keyword id="KW-0694">RNA-binding</keyword>
<keyword id="KW-0699">rRNA-binding</keyword>
<gene>
    <name evidence="1" type="primary">rpsF</name>
    <name type="ordered locus">ASA_0707</name>
</gene>
<evidence type="ECO:0000255" key="1">
    <source>
        <dbReference type="HAMAP-Rule" id="MF_00360"/>
    </source>
</evidence>
<evidence type="ECO:0000256" key="2">
    <source>
        <dbReference type="SAM" id="MobiDB-lite"/>
    </source>
</evidence>
<evidence type="ECO:0000305" key="3"/>
<sequence>MRHYEIVFMVHPDQSEQVPGMIERYTGAITTAGGTIHRMEDWGRRQLAYPIDKLHKAHYVLMNVEAEQAVIDELETNFRFNDAVIRNMIMRTKHAVTEVSPMAKAKEERFVRRDDERREDTVEAASSEE</sequence>